<protein>
    <recommendedName>
        <fullName evidence="1">Inorganic pyrophosphatase</fullName>
        <ecNumber evidence="1">3.6.1.1</ecNumber>
    </recommendedName>
    <alternativeName>
        <fullName evidence="1">Pyrophosphate phospho-hydrolase</fullName>
        <shortName evidence="1">PPase</shortName>
    </alternativeName>
</protein>
<accession>Q9KP34</accession>
<feature type="chain" id="PRO_0000137537" description="Inorganic pyrophosphatase">
    <location>
        <begin position="1"/>
        <end position="176"/>
    </location>
</feature>
<feature type="binding site" evidence="1">
    <location>
        <position position="30"/>
    </location>
    <ligand>
        <name>substrate</name>
    </ligand>
</feature>
<feature type="binding site" evidence="1">
    <location>
        <position position="44"/>
    </location>
    <ligand>
        <name>substrate</name>
    </ligand>
</feature>
<feature type="binding site" evidence="1">
    <location>
        <position position="56"/>
    </location>
    <ligand>
        <name>substrate</name>
    </ligand>
</feature>
<feature type="binding site" evidence="1">
    <location>
        <position position="66"/>
    </location>
    <ligand>
        <name>Mg(2+)</name>
        <dbReference type="ChEBI" id="CHEBI:18420"/>
        <label>1</label>
    </ligand>
</feature>
<feature type="binding site" evidence="1">
    <location>
        <position position="71"/>
    </location>
    <ligand>
        <name>Mg(2+)</name>
        <dbReference type="ChEBI" id="CHEBI:18420"/>
        <label>1</label>
    </ligand>
</feature>
<feature type="binding site" evidence="1">
    <location>
        <position position="71"/>
    </location>
    <ligand>
        <name>Mg(2+)</name>
        <dbReference type="ChEBI" id="CHEBI:18420"/>
        <label>2</label>
    </ligand>
</feature>
<feature type="binding site" evidence="1">
    <location>
        <position position="103"/>
    </location>
    <ligand>
        <name>Mg(2+)</name>
        <dbReference type="ChEBI" id="CHEBI:18420"/>
        <label>1</label>
    </ligand>
</feature>
<feature type="binding site" evidence="1">
    <location>
        <position position="142"/>
    </location>
    <ligand>
        <name>substrate</name>
    </ligand>
</feature>
<dbReference type="EC" id="3.6.1.1" evidence="1"/>
<dbReference type="EMBL" id="AE003852">
    <property type="protein sequence ID" value="AAF95686.1"/>
    <property type="molecule type" value="Genomic_DNA"/>
</dbReference>
<dbReference type="PIR" id="C82064">
    <property type="entry name" value="C82064"/>
</dbReference>
<dbReference type="RefSeq" id="NP_232173.1">
    <property type="nucleotide sequence ID" value="NC_002505.1"/>
</dbReference>
<dbReference type="RefSeq" id="WP_000056163.1">
    <property type="nucleotide sequence ID" value="NZ_LT906614.1"/>
</dbReference>
<dbReference type="SMR" id="Q9KP34"/>
<dbReference type="STRING" id="243277.VC_2545"/>
<dbReference type="DNASU" id="2615562"/>
<dbReference type="EnsemblBacteria" id="AAF95686">
    <property type="protein sequence ID" value="AAF95686"/>
    <property type="gene ID" value="VC_2545"/>
</dbReference>
<dbReference type="GeneID" id="94012803"/>
<dbReference type="KEGG" id="vch:VC_2545"/>
<dbReference type="PATRIC" id="fig|243277.26.peg.2423"/>
<dbReference type="eggNOG" id="COG0221">
    <property type="taxonomic scope" value="Bacteria"/>
</dbReference>
<dbReference type="HOGENOM" id="CLU_073198_1_0_6"/>
<dbReference type="Proteomes" id="UP000000584">
    <property type="component" value="Chromosome 1"/>
</dbReference>
<dbReference type="GO" id="GO:0005829">
    <property type="term" value="C:cytosol"/>
    <property type="evidence" value="ECO:0000318"/>
    <property type="project" value="GO_Central"/>
</dbReference>
<dbReference type="GO" id="GO:0004427">
    <property type="term" value="F:inorganic diphosphate phosphatase activity"/>
    <property type="evidence" value="ECO:0000318"/>
    <property type="project" value="GO_Central"/>
</dbReference>
<dbReference type="GO" id="GO:0000287">
    <property type="term" value="F:magnesium ion binding"/>
    <property type="evidence" value="ECO:0000318"/>
    <property type="project" value="GO_Central"/>
</dbReference>
<dbReference type="GO" id="GO:0006796">
    <property type="term" value="P:phosphate-containing compound metabolic process"/>
    <property type="evidence" value="ECO:0000318"/>
    <property type="project" value="GO_Central"/>
</dbReference>
<dbReference type="CDD" id="cd00412">
    <property type="entry name" value="pyrophosphatase"/>
    <property type="match status" value="1"/>
</dbReference>
<dbReference type="FunFam" id="3.90.80.10:FF:000001">
    <property type="entry name" value="Inorganic pyrophosphatase"/>
    <property type="match status" value="1"/>
</dbReference>
<dbReference type="Gene3D" id="3.90.80.10">
    <property type="entry name" value="Inorganic pyrophosphatase"/>
    <property type="match status" value="1"/>
</dbReference>
<dbReference type="HAMAP" id="MF_00209">
    <property type="entry name" value="Inorganic_PPase"/>
    <property type="match status" value="1"/>
</dbReference>
<dbReference type="InterPro" id="IPR008162">
    <property type="entry name" value="Pyrophosphatase"/>
</dbReference>
<dbReference type="InterPro" id="IPR036649">
    <property type="entry name" value="Pyrophosphatase_sf"/>
</dbReference>
<dbReference type="NCBIfam" id="NF002317">
    <property type="entry name" value="PRK01250.1"/>
    <property type="match status" value="1"/>
</dbReference>
<dbReference type="PANTHER" id="PTHR10286">
    <property type="entry name" value="INORGANIC PYROPHOSPHATASE"/>
    <property type="match status" value="1"/>
</dbReference>
<dbReference type="Pfam" id="PF00719">
    <property type="entry name" value="Pyrophosphatase"/>
    <property type="match status" value="1"/>
</dbReference>
<dbReference type="SUPFAM" id="SSF50324">
    <property type="entry name" value="Inorganic pyrophosphatase"/>
    <property type="match status" value="1"/>
</dbReference>
<dbReference type="PROSITE" id="PS00387">
    <property type="entry name" value="PPASE"/>
    <property type="match status" value="1"/>
</dbReference>
<comment type="function">
    <text evidence="1">Catalyzes the hydrolysis of inorganic pyrophosphate (PPi) forming two phosphate ions.</text>
</comment>
<comment type="catalytic activity">
    <reaction evidence="1">
        <text>diphosphate + H2O = 2 phosphate + H(+)</text>
        <dbReference type="Rhea" id="RHEA:24576"/>
        <dbReference type="ChEBI" id="CHEBI:15377"/>
        <dbReference type="ChEBI" id="CHEBI:15378"/>
        <dbReference type="ChEBI" id="CHEBI:33019"/>
        <dbReference type="ChEBI" id="CHEBI:43474"/>
        <dbReference type="EC" id="3.6.1.1"/>
    </reaction>
</comment>
<comment type="cofactor">
    <cofactor evidence="1">
        <name>Mg(2+)</name>
        <dbReference type="ChEBI" id="CHEBI:18420"/>
    </cofactor>
</comment>
<comment type="subunit">
    <text evidence="1">Homohexamer.</text>
</comment>
<comment type="subcellular location">
    <subcellularLocation>
        <location evidence="1">Cytoplasm</location>
    </subcellularLocation>
</comment>
<comment type="similarity">
    <text evidence="1">Belongs to the PPase family.</text>
</comment>
<evidence type="ECO:0000255" key="1">
    <source>
        <dbReference type="HAMAP-Rule" id="MF_00209"/>
    </source>
</evidence>
<proteinExistence type="inferred from homology"/>
<keyword id="KW-0963">Cytoplasm</keyword>
<keyword id="KW-0378">Hydrolase</keyword>
<keyword id="KW-0460">Magnesium</keyword>
<keyword id="KW-0479">Metal-binding</keyword>
<keyword id="KW-1185">Reference proteome</keyword>
<sequence>MSLNNVPAGKSLPDDIYVVIEIPANADPIKYEVDKESGAVFVDRFMSAPMFYPCNYGYVNHTLSLDGDPVDVLVPTPYPLIPGSVIRCRPVGVLKMTDESGEDAKVVAVPHTKISKEYDHIQDVNDLPALLKAQITHFFERYKELESGKWVKVDGWEDAASARAEILSSYERAQNK</sequence>
<organism>
    <name type="scientific">Vibrio cholerae serotype O1 (strain ATCC 39315 / El Tor Inaba N16961)</name>
    <dbReference type="NCBI Taxonomy" id="243277"/>
    <lineage>
        <taxon>Bacteria</taxon>
        <taxon>Pseudomonadati</taxon>
        <taxon>Pseudomonadota</taxon>
        <taxon>Gammaproteobacteria</taxon>
        <taxon>Vibrionales</taxon>
        <taxon>Vibrionaceae</taxon>
        <taxon>Vibrio</taxon>
    </lineage>
</organism>
<reference key="1">
    <citation type="journal article" date="2000" name="Nature">
        <title>DNA sequence of both chromosomes of the cholera pathogen Vibrio cholerae.</title>
        <authorList>
            <person name="Heidelberg J.F."/>
            <person name="Eisen J.A."/>
            <person name="Nelson W.C."/>
            <person name="Clayton R.A."/>
            <person name="Gwinn M.L."/>
            <person name="Dodson R.J."/>
            <person name="Haft D.H."/>
            <person name="Hickey E.K."/>
            <person name="Peterson J.D."/>
            <person name="Umayam L.A."/>
            <person name="Gill S.R."/>
            <person name="Nelson K.E."/>
            <person name="Read T.D."/>
            <person name="Tettelin H."/>
            <person name="Richardson D.L."/>
            <person name="Ermolaeva M.D."/>
            <person name="Vamathevan J.J."/>
            <person name="Bass S."/>
            <person name="Qin H."/>
            <person name="Dragoi I."/>
            <person name="Sellers P."/>
            <person name="McDonald L.A."/>
            <person name="Utterback T.R."/>
            <person name="Fleischmann R.D."/>
            <person name="Nierman W.C."/>
            <person name="White O."/>
            <person name="Salzberg S.L."/>
            <person name="Smith H.O."/>
            <person name="Colwell R.R."/>
            <person name="Mekalanos J.J."/>
            <person name="Venter J.C."/>
            <person name="Fraser C.M."/>
        </authorList>
    </citation>
    <scope>NUCLEOTIDE SEQUENCE [LARGE SCALE GENOMIC DNA]</scope>
    <source>
        <strain>ATCC 39315 / El Tor Inaba N16961</strain>
    </source>
</reference>
<name>IPYR_VIBCH</name>
<gene>
    <name evidence="1" type="primary">ppa</name>
    <name type="ordered locus">VC_2545</name>
</gene>